<comment type="function">
    <text evidence="1">An accessory protein needed during the final step in the assembly of 30S ribosomal subunit, possibly for assembly of the head region. Essential for efficient processing of 16S rRNA. May be needed both before and after RbfA during the maturation of 16S rRNA. It has affinity for free ribosomal 30S subunits but not for 70S ribosomes.</text>
</comment>
<comment type="subunit">
    <text evidence="1">Binds ribosomal protein uS19.</text>
</comment>
<comment type="subcellular location">
    <subcellularLocation>
        <location evidence="1">Cytoplasm</location>
    </subcellularLocation>
</comment>
<comment type="domain">
    <text evidence="1">The PRC barrel domain binds ribosomal protein uS19.</text>
</comment>
<comment type="similarity">
    <text evidence="1">Belongs to the RimM family.</text>
</comment>
<accession>B2FUB4</accession>
<reference key="1">
    <citation type="journal article" date="2008" name="Genome Biol.">
        <title>The complete genome, comparative and functional analysis of Stenotrophomonas maltophilia reveals an organism heavily shielded by drug resistance determinants.</title>
        <authorList>
            <person name="Crossman L.C."/>
            <person name="Gould V.C."/>
            <person name="Dow J.M."/>
            <person name="Vernikos G.S."/>
            <person name="Okazaki A."/>
            <person name="Sebaihia M."/>
            <person name="Saunders D."/>
            <person name="Arrowsmith C."/>
            <person name="Carver T."/>
            <person name="Peters N."/>
            <person name="Adlem E."/>
            <person name="Kerhornou A."/>
            <person name="Lord A."/>
            <person name="Murphy L."/>
            <person name="Seeger K."/>
            <person name="Squares R."/>
            <person name="Rutter S."/>
            <person name="Quail M.A."/>
            <person name="Rajandream M.A."/>
            <person name="Harris D."/>
            <person name="Churcher C."/>
            <person name="Bentley S.D."/>
            <person name="Parkhill J."/>
            <person name="Thomson N.R."/>
            <person name="Avison M.B."/>
        </authorList>
    </citation>
    <scope>NUCLEOTIDE SEQUENCE [LARGE SCALE GENOMIC DNA]</scope>
    <source>
        <strain>K279a</strain>
    </source>
</reference>
<sequence>MKDIERRILLGRVVGAFGVRGEIKLESWTEPRSAIFRYQPWIVRSPSGVETTIEGVRGRDSGKHLVARFPGVEDRDTVEAMRGTEIYVARSALPPPKPDEYYWVDLEGLDVKTTEGVALGQVSHLFSTGANDVVVVRGDRERMIPFVQPDFVKSVDFEANLVVVDWDPEF</sequence>
<gene>
    <name evidence="1" type="primary">rimM</name>
    <name type="ordered locus">Smlt1375</name>
</gene>
<organism>
    <name type="scientific">Stenotrophomonas maltophilia (strain K279a)</name>
    <dbReference type="NCBI Taxonomy" id="522373"/>
    <lineage>
        <taxon>Bacteria</taxon>
        <taxon>Pseudomonadati</taxon>
        <taxon>Pseudomonadota</taxon>
        <taxon>Gammaproteobacteria</taxon>
        <taxon>Lysobacterales</taxon>
        <taxon>Lysobacteraceae</taxon>
        <taxon>Stenotrophomonas</taxon>
        <taxon>Stenotrophomonas maltophilia group</taxon>
    </lineage>
</organism>
<name>RIMM_STRMK</name>
<evidence type="ECO:0000255" key="1">
    <source>
        <dbReference type="HAMAP-Rule" id="MF_00014"/>
    </source>
</evidence>
<keyword id="KW-0143">Chaperone</keyword>
<keyword id="KW-0963">Cytoplasm</keyword>
<keyword id="KW-1185">Reference proteome</keyword>
<keyword id="KW-0690">Ribosome biogenesis</keyword>
<keyword id="KW-0698">rRNA processing</keyword>
<protein>
    <recommendedName>
        <fullName evidence="1">Ribosome maturation factor RimM</fullName>
    </recommendedName>
</protein>
<proteinExistence type="inferred from homology"/>
<dbReference type="EMBL" id="AM743169">
    <property type="protein sequence ID" value="CAQ44920.1"/>
    <property type="molecule type" value="Genomic_DNA"/>
</dbReference>
<dbReference type="RefSeq" id="WP_005408595.1">
    <property type="nucleotide sequence ID" value="NC_010943.1"/>
</dbReference>
<dbReference type="SMR" id="B2FUB4"/>
<dbReference type="EnsemblBacteria" id="CAQ44920">
    <property type="protein sequence ID" value="CAQ44920"/>
    <property type="gene ID" value="Smlt1375"/>
</dbReference>
<dbReference type="GeneID" id="93832480"/>
<dbReference type="KEGG" id="sml:Smlt1375"/>
<dbReference type="eggNOG" id="COG0806">
    <property type="taxonomic scope" value="Bacteria"/>
</dbReference>
<dbReference type="HOGENOM" id="CLU_077636_1_0_6"/>
<dbReference type="Proteomes" id="UP000008840">
    <property type="component" value="Chromosome"/>
</dbReference>
<dbReference type="GO" id="GO:0005737">
    <property type="term" value="C:cytoplasm"/>
    <property type="evidence" value="ECO:0007669"/>
    <property type="project" value="UniProtKB-SubCell"/>
</dbReference>
<dbReference type="GO" id="GO:0005840">
    <property type="term" value="C:ribosome"/>
    <property type="evidence" value="ECO:0007669"/>
    <property type="project" value="InterPro"/>
</dbReference>
<dbReference type="GO" id="GO:0043022">
    <property type="term" value="F:ribosome binding"/>
    <property type="evidence" value="ECO:0007669"/>
    <property type="project" value="InterPro"/>
</dbReference>
<dbReference type="GO" id="GO:0042274">
    <property type="term" value="P:ribosomal small subunit biogenesis"/>
    <property type="evidence" value="ECO:0007669"/>
    <property type="project" value="UniProtKB-UniRule"/>
</dbReference>
<dbReference type="GO" id="GO:0006364">
    <property type="term" value="P:rRNA processing"/>
    <property type="evidence" value="ECO:0007669"/>
    <property type="project" value="UniProtKB-UniRule"/>
</dbReference>
<dbReference type="Gene3D" id="2.30.30.240">
    <property type="entry name" value="PRC-barrel domain"/>
    <property type="match status" value="1"/>
</dbReference>
<dbReference type="Gene3D" id="2.40.30.60">
    <property type="entry name" value="RimM"/>
    <property type="match status" value="1"/>
</dbReference>
<dbReference type="HAMAP" id="MF_00014">
    <property type="entry name" value="Ribosome_mat_RimM"/>
    <property type="match status" value="1"/>
</dbReference>
<dbReference type="InterPro" id="IPR011033">
    <property type="entry name" value="PRC_barrel-like_sf"/>
</dbReference>
<dbReference type="InterPro" id="IPR056792">
    <property type="entry name" value="PRC_RimM"/>
</dbReference>
<dbReference type="InterPro" id="IPR011961">
    <property type="entry name" value="RimM"/>
</dbReference>
<dbReference type="InterPro" id="IPR002676">
    <property type="entry name" value="RimM_N"/>
</dbReference>
<dbReference type="InterPro" id="IPR036976">
    <property type="entry name" value="RimM_N_sf"/>
</dbReference>
<dbReference type="InterPro" id="IPR009000">
    <property type="entry name" value="Transl_B-barrel_sf"/>
</dbReference>
<dbReference type="NCBIfam" id="TIGR02273">
    <property type="entry name" value="16S_RimM"/>
    <property type="match status" value="1"/>
</dbReference>
<dbReference type="PANTHER" id="PTHR33692">
    <property type="entry name" value="RIBOSOME MATURATION FACTOR RIMM"/>
    <property type="match status" value="1"/>
</dbReference>
<dbReference type="PANTHER" id="PTHR33692:SF1">
    <property type="entry name" value="RIBOSOME MATURATION FACTOR RIMM"/>
    <property type="match status" value="1"/>
</dbReference>
<dbReference type="Pfam" id="PF24986">
    <property type="entry name" value="PRC_RimM"/>
    <property type="match status" value="1"/>
</dbReference>
<dbReference type="Pfam" id="PF01782">
    <property type="entry name" value="RimM"/>
    <property type="match status" value="1"/>
</dbReference>
<dbReference type="SUPFAM" id="SSF50346">
    <property type="entry name" value="PRC-barrel domain"/>
    <property type="match status" value="1"/>
</dbReference>
<dbReference type="SUPFAM" id="SSF50447">
    <property type="entry name" value="Translation proteins"/>
    <property type="match status" value="1"/>
</dbReference>
<feature type="chain" id="PRO_1000089524" description="Ribosome maturation factor RimM">
    <location>
        <begin position="1"/>
        <end position="170"/>
    </location>
</feature>
<feature type="domain" description="PRC barrel" evidence="1">
    <location>
        <begin position="97"/>
        <end position="170"/>
    </location>
</feature>